<proteinExistence type="inferred from homology"/>
<organism>
    <name type="scientific">Rhizobium etli (strain ATCC 51251 / DSM 11541 / JCM 21823 / NBRC 15573 / CFN 42)</name>
    <dbReference type="NCBI Taxonomy" id="347834"/>
    <lineage>
        <taxon>Bacteria</taxon>
        <taxon>Pseudomonadati</taxon>
        <taxon>Pseudomonadota</taxon>
        <taxon>Alphaproteobacteria</taxon>
        <taxon>Hyphomicrobiales</taxon>
        <taxon>Rhizobiaceae</taxon>
        <taxon>Rhizobium/Agrobacterium group</taxon>
        <taxon>Rhizobium</taxon>
    </lineage>
</organism>
<name>PDXH_RHIEC</name>
<accession>Q2KBN4</accession>
<keyword id="KW-0285">Flavoprotein</keyword>
<keyword id="KW-0288">FMN</keyword>
<keyword id="KW-0560">Oxidoreductase</keyword>
<keyword id="KW-0664">Pyridoxine biosynthesis</keyword>
<keyword id="KW-1185">Reference proteome</keyword>
<comment type="function">
    <text evidence="1">Catalyzes the oxidation of either pyridoxine 5'-phosphate (PNP) or pyridoxamine 5'-phosphate (PMP) into pyridoxal 5'-phosphate (PLP).</text>
</comment>
<comment type="catalytic activity">
    <reaction evidence="1">
        <text>pyridoxamine 5'-phosphate + O2 + H2O = pyridoxal 5'-phosphate + H2O2 + NH4(+)</text>
        <dbReference type="Rhea" id="RHEA:15817"/>
        <dbReference type="ChEBI" id="CHEBI:15377"/>
        <dbReference type="ChEBI" id="CHEBI:15379"/>
        <dbReference type="ChEBI" id="CHEBI:16240"/>
        <dbReference type="ChEBI" id="CHEBI:28938"/>
        <dbReference type="ChEBI" id="CHEBI:58451"/>
        <dbReference type="ChEBI" id="CHEBI:597326"/>
        <dbReference type="EC" id="1.4.3.5"/>
    </reaction>
</comment>
<comment type="catalytic activity">
    <reaction evidence="1">
        <text>pyridoxine 5'-phosphate + O2 = pyridoxal 5'-phosphate + H2O2</text>
        <dbReference type="Rhea" id="RHEA:15149"/>
        <dbReference type="ChEBI" id="CHEBI:15379"/>
        <dbReference type="ChEBI" id="CHEBI:16240"/>
        <dbReference type="ChEBI" id="CHEBI:58589"/>
        <dbReference type="ChEBI" id="CHEBI:597326"/>
        <dbReference type="EC" id="1.4.3.5"/>
    </reaction>
</comment>
<comment type="cofactor">
    <cofactor evidence="1">
        <name>FMN</name>
        <dbReference type="ChEBI" id="CHEBI:58210"/>
    </cofactor>
    <text evidence="1">Binds 1 FMN per subunit.</text>
</comment>
<comment type="pathway">
    <text evidence="1">Cofactor metabolism; pyridoxal 5'-phosphate salvage; pyridoxal 5'-phosphate from pyridoxamine 5'-phosphate: step 1/1.</text>
</comment>
<comment type="pathway">
    <text evidence="1">Cofactor metabolism; pyridoxal 5'-phosphate salvage; pyridoxal 5'-phosphate from pyridoxine 5'-phosphate: step 1/1.</text>
</comment>
<comment type="subunit">
    <text evidence="1">Homodimer.</text>
</comment>
<comment type="similarity">
    <text evidence="1">Belongs to the pyridoxamine 5'-phosphate oxidase family.</text>
</comment>
<reference key="1">
    <citation type="journal article" date="2006" name="Proc. Natl. Acad. Sci. U.S.A.">
        <title>The partitioned Rhizobium etli genome: genetic and metabolic redundancy in seven interacting replicons.</title>
        <authorList>
            <person name="Gonzalez V."/>
            <person name="Santamaria R.I."/>
            <person name="Bustos P."/>
            <person name="Hernandez-Gonzalez I."/>
            <person name="Medrano-Soto A."/>
            <person name="Moreno-Hagelsieb G."/>
            <person name="Janga S.C."/>
            <person name="Ramirez M.A."/>
            <person name="Jimenez-Jacinto V."/>
            <person name="Collado-Vides J."/>
            <person name="Davila G."/>
        </authorList>
    </citation>
    <scope>NUCLEOTIDE SEQUENCE [LARGE SCALE GENOMIC DNA]</scope>
    <source>
        <strain>ATCC 51251 / DSM 11541 / JCM 21823 / NBRC 15573 / CFN 42</strain>
    </source>
</reference>
<sequence>MSANELTSGDFTESGEPFKLFAEWLKEAEASEPNDPNAVALATVDEHGLPNVRMVLLKGFDDDGFVFYTNFESQKGREILGQKKAAMCFHWKSLRRQVRLRGPVEIVSDAEADAYFKTRARGSRIGAWASKQSRPLESRFALEKAVAEYTARYAIGEIPRPPHWSGFRIRPTSIEFWKDQQFRLHDRIEFRRPSPVGAWEKVRMYP</sequence>
<dbReference type="EC" id="1.4.3.5" evidence="1"/>
<dbReference type="EMBL" id="CP000133">
    <property type="protein sequence ID" value="ABC89752.1"/>
    <property type="molecule type" value="Genomic_DNA"/>
</dbReference>
<dbReference type="RefSeq" id="WP_011424288.1">
    <property type="nucleotide sequence ID" value="NC_007761.1"/>
</dbReference>
<dbReference type="SMR" id="Q2KBN4"/>
<dbReference type="KEGG" id="ret:RHE_CH00941"/>
<dbReference type="eggNOG" id="COG0259">
    <property type="taxonomic scope" value="Bacteria"/>
</dbReference>
<dbReference type="HOGENOM" id="CLU_032263_2_3_5"/>
<dbReference type="OrthoDB" id="9780392at2"/>
<dbReference type="UniPathway" id="UPA01068">
    <property type="reaction ID" value="UER00304"/>
</dbReference>
<dbReference type="UniPathway" id="UPA01068">
    <property type="reaction ID" value="UER00305"/>
</dbReference>
<dbReference type="Proteomes" id="UP000001936">
    <property type="component" value="Chromosome"/>
</dbReference>
<dbReference type="GO" id="GO:0010181">
    <property type="term" value="F:FMN binding"/>
    <property type="evidence" value="ECO:0007669"/>
    <property type="project" value="UniProtKB-UniRule"/>
</dbReference>
<dbReference type="GO" id="GO:0004733">
    <property type="term" value="F:pyridoxamine phosphate oxidase activity"/>
    <property type="evidence" value="ECO:0007669"/>
    <property type="project" value="UniProtKB-UniRule"/>
</dbReference>
<dbReference type="GO" id="GO:0008615">
    <property type="term" value="P:pyridoxine biosynthetic process"/>
    <property type="evidence" value="ECO:0007669"/>
    <property type="project" value="UniProtKB-KW"/>
</dbReference>
<dbReference type="Gene3D" id="2.30.110.10">
    <property type="entry name" value="Electron Transport, Fmn-binding Protein, Chain A"/>
    <property type="match status" value="1"/>
</dbReference>
<dbReference type="HAMAP" id="MF_01629">
    <property type="entry name" value="PdxH"/>
    <property type="match status" value="1"/>
</dbReference>
<dbReference type="InterPro" id="IPR000659">
    <property type="entry name" value="Pyridox_Oxase"/>
</dbReference>
<dbReference type="InterPro" id="IPR011576">
    <property type="entry name" value="Pyridox_Oxase_N"/>
</dbReference>
<dbReference type="InterPro" id="IPR019576">
    <property type="entry name" value="Pyridoxamine_oxidase_dimer_C"/>
</dbReference>
<dbReference type="InterPro" id="IPR012349">
    <property type="entry name" value="Split_barrel_FMN-bd"/>
</dbReference>
<dbReference type="NCBIfam" id="TIGR00558">
    <property type="entry name" value="pdxH"/>
    <property type="match status" value="1"/>
</dbReference>
<dbReference type="NCBIfam" id="NF004231">
    <property type="entry name" value="PRK05679.1"/>
    <property type="match status" value="1"/>
</dbReference>
<dbReference type="PANTHER" id="PTHR10851:SF0">
    <property type="entry name" value="PYRIDOXINE-5'-PHOSPHATE OXIDASE"/>
    <property type="match status" value="1"/>
</dbReference>
<dbReference type="PANTHER" id="PTHR10851">
    <property type="entry name" value="PYRIDOXINE-5-PHOSPHATE OXIDASE"/>
    <property type="match status" value="1"/>
</dbReference>
<dbReference type="Pfam" id="PF10590">
    <property type="entry name" value="PNP_phzG_C"/>
    <property type="match status" value="1"/>
</dbReference>
<dbReference type="Pfam" id="PF01243">
    <property type="entry name" value="PNPOx_N"/>
    <property type="match status" value="1"/>
</dbReference>
<dbReference type="PIRSF" id="PIRSF000190">
    <property type="entry name" value="Pyd_amn-ph_oxd"/>
    <property type="match status" value="1"/>
</dbReference>
<dbReference type="SUPFAM" id="SSF50475">
    <property type="entry name" value="FMN-binding split barrel"/>
    <property type="match status" value="1"/>
</dbReference>
<gene>
    <name evidence="1" type="primary">pdxH</name>
    <name type="ordered locus">RHE_CH00941</name>
</gene>
<protein>
    <recommendedName>
        <fullName evidence="1">Pyridoxine/pyridoxamine 5'-phosphate oxidase</fullName>
        <ecNumber evidence="1">1.4.3.5</ecNumber>
    </recommendedName>
    <alternativeName>
        <fullName evidence="1">PNP/PMP oxidase</fullName>
        <shortName evidence="1">PNPOx</shortName>
    </alternativeName>
    <alternativeName>
        <fullName evidence="1">Pyridoxal 5'-phosphate synthase</fullName>
    </alternativeName>
</protein>
<evidence type="ECO:0000255" key="1">
    <source>
        <dbReference type="HAMAP-Rule" id="MF_01629"/>
    </source>
</evidence>
<feature type="chain" id="PRO_0000255879" description="Pyridoxine/pyridoxamine 5'-phosphate oxidase">
    <location>
        <begin position="1"/>
        <end position="206"/>
    </location>
</feature>
<feature type="binding site" evidence="1">
    <location>
        <begin position="53"/>
        <end position="58"/>
    </location>
    <ligand>
        <name>FMN</name>
        <dbReference type="ChEBI" id="CHEBI:58210"/>
    </ligand>
</feature>
<feature type="binding site" evidence="1">
    <location>
        <position position="58"/>
    </location>
    <ligand>
        <name>substrate</name>
    </ligand>
</feature>
<feature type="binding site" evidence="1">
    <location>
        <begin position="68"/>
        <end position="69"/>
    </location>
    <ligand>
        <name>FMN</name>
        <dbReference type="ChEBI" id="CHEBI:58210"/>
    </ligand>
</feature>
<feature type="binding site" evidence="1">
    <location>
        <position position="75"/>
    </location>
    <ligand>
        <name>FMN</name>
        <dbReference type="ChEBI" id="CHEBI:58210"/>
    </ligand>
</feature>
<feature type="binding site" evidence="1">
    <location>
        <position position="97"/>
    </location>
    <ligand>
        <name>FMN</name>
        <dbReference type="ChEBI" id="CHEBI:58210"/>
    </ligand>
</feature>
<feature type="binding site" evidence="1">
    <location>
        <position position="115"/>
    </location>
    <ligand>
        <name>substrate</name>
    </ligand>
</feature>
<feature type="binding site" evidence="1">
    <location>
        <position position="119"/>
    </location>
    <ligand>
        <name>substrate</name>
    </ligand>
</feature>
<feature type="binding site" evidence="1">
    <location>
        <position position="123"/>
    </location>
    <ligand>
        <name>substrate</name>
    </ligand>
</feature>
<feature type="binding site" evidence="1">
    <location>
        <begin position="132"/>
        <end position="133"/>
    </location>
    <ligand>
        <name>FMN</name>
        <dbReference type="ChEBI" id="CHEBI:58210"/>
    </ligand>
</feature>
<feature type="binding site" evidence="1">
    <location>
        <position position="177"/>
    </location>
    <ligand>
        <name>FMN</name>
        <dbReference type="ChEBI" id="CHEBI:58210"/>
    </ligand>
</feature>
<feature type="binding site" evidence="1">
    <location>
        <begin position="183"/>
        <end position="185"/>
    </location>
    <ligand>
        <name>substrate</name>
    </ligand>
</feature>
<feature type="binding site" evidence="1">
    <location>
        <position position="187"/>
    </location>
    <ligand>
        <name>FMN</name>
        <dbReference type="ChEBI" id="CHEBI:58210"/>
    </ligand>
</feature>